<keyword id="KW-0479">Metal-binding</keyword>
<keyword id="KW-0687">Ribonucleoprotein</keyword>
<keyword id="KW-0689">Ribosomal protein</keyword>
<keyword id="KW-0694">RNA-binding</keyword>
<keyword id="KW-0699">rRNA-binding</keyword>
<keyword id="KW-0862">Zinc</keyword>
<reference key="1">
    <citation type="journal article" date="2007" name="PLoS ONE">
        <title>Genome sequencing shows that European isolates of Francisella tularensis subspecies tularensis are almost identical to US laboratory strain Schu S4.</title>
        <authorList>
            <person name="Chaudhuri R.R."/>
            <person name="Ren C.-P."/>
            <person name="Desmond L."/>
            <person name="Vincent G.A."/>
            <person name="Silman N.J."/>
            <person name="Brehm J.K."/>
            <person name="Elmore M.J."/>
            <person name="Hudson M.J."/>
            <person name="Forsman M."/>
            <person name="Isherwood K.E."/>
            <person name="Gurycova D."/>
            <person name="Minton N.P."/>
            <person name="Titball R.W."/>
            <person name="Pallen M.J."/>
            <person name="Vipond R."/>
        </authorList>
    </citation>
    <scope>NUCLEOTIDE SEQUENCE [LARGE SCALE GENOMIC DNA]</scope>
    <source>
        <strain>FSC 198</strain>
    </source>
</reference>
<feature type="chain" id="PRO_1000126631" description="Large ribosomal subunit protein bL31">
    <location>
        <begin position="1"/>
        <end position="71"/>
    </location>
</feature>
<feature type="binding site" evidence="1">
    <location>
        <position position="16"/>
    </location>
    <ligand>
        <name>Zn(2+)</name>
        <dbReference type="ChEBI" id="CHEBI:29105"/>
    </ligand>
</feature>
<feature type="binding site" evidence="1">
    <location>
        <position position="18"/>
    </location>
    <ligand>
        <name>Zn(2+)</name>
        <dbReference type="ChEBI" id="CHEBI:29105"/>
    </ligand>
</feature>
<feature type="binding site" evidence="1">
    <location>
        <position position="38"/>
    </location>
    <ligand>
        <name>Zn(2+)</name>
        <dbReference type="ChEBI" id="CHEBI:29105"/>
    </ligand>
</feature>
<feature type="binding site" evidence="1">
    <location>
        <position position="41"/>
    </location>
    <ligand>
        <name>Zn(2+)</name>
        <dbReference type="ChEBI" id="CHEBI:29105"/>
    </ligand>
</feature>
<gene>
    <name evidence="1" type="primary">rpmE</name>
    <name type="ordered locus">FTF0366</name>
</gene>
<organism>
    <name type="scientific">Francisella tularensis subsp. tularensis (strain FSC 198)</name>
    <dbReference type="NCBI Taxonomy" id="393115"/>
    <lineage>
        <taxon>Bacteria</taxon>
        <taxon>Pseudomonadati</taxon>
        <taxon>Pseudomonadota</taxon>
        <taxon>Gammaproteobacteria</taxon>
        <taxon>Thiotrichales</taxon>
        <taxon>Francisellaceae</taxon>
        <taxon>Francisella</taxon>
    </lineage>
</organism>
<protein>
    <recommendedName>
        <fullName evidence="1">Large ribosomal subunit protein bL31</fullName>
    </recommendedName>
    <alternativeName>
        <fullName evidence="2">50S ribosomal protein L31</fullName>
    </alternativeName>
</protein>
<evidence type="ECO:0000255" key="1">
    <source>
        <dbReference type="HAMAP-Rule" id="MF_00501"/>
    </source>
</evidence>
<evidence type="ECO:0000305" key="2"/>
<comment type="function">
    <text evidence="1">Binds the 23S rRNA.</text>
</comment>
<comment type="cofactor">
    <cofactor evidence="1">
        <name>Zn(2+)</name>
        <dbReference type="ChEBI" id="CHEBI:29105"/>
    </cofactor>
    <text evidence="1">Binds 1 zinc ion per subunit.</text>
</comment>
<comment type="subunit">
    <text evidence="1">Part of the 50S ribosomal subunit.</text>
</comment>
<comment type="similarity">
    <text evidence="1">Belongs to the bacterial ribosomal protein bL31 family. Type A subfamily.</text>
</comment>
<proteinExistence type="inferred from homology"/>
<dbReference type="EMBL" id="AM286280">
    <property type="protein sequence ID" value="CAL08382.1"/>
    <property type="molecule type" value="Genomic_DNA"/>
</dbReference>
<dbReference type="RefSeq" id="WP_003027123.1">
    <property type="nucleotide sequence ID" value="NC_008245.1"/>
</dbReference>
<dbReference type="SMR" id="Q14J81"/>
<dbReference type="KEGG" id="ftf:FTF0366"/>
<dbReference type="HOGENOM" id="CLU_114306_4_3_6"/>
<dbReference type="GO" id="GO:1990904">
    <property type="term" value="C:ribonucleoprotein complex"/>
    <property type="evidence" value="ECO:0007669"/>
    <property type="project" value="UniProtKB-KW"/>
</dbReference>
<dbReference type="GO" id="GO:0005840">
    <property type="term" value="C:ribosome"/>
    <property type="evidence" value="ECO:0007669"/>
    <property type="project" value="UniProtKB-KW"/>
</dbReference>
<dbReference type="GO" id="GO:0046872">
    <property type="term" value="F:metal ion binding"/>
    <property type="evidence" value="ECO:0007669"/>
    <property type="project" value="UniProtKB-KW"/>
</dbReference>
<dbReference type="GO" id="GO:0019843">
    <property type="term" value="F:rRNA binding"/>
    <property type="evidence" value="ECO:0007669"/>
    <property type="project" value="UniProtKB-KW"/>
</dbReference>
<dbReference type="GO" id="GO:0003735">
    <property type="term" value="F:structural constituent of ribosome"/>
    <property type="evidence" value="ECO:0007669"/>
    <property type="project" value="InterPro"/>
</dbReference>
<dbReference type="GO" id="GO:0006412">
    <property type="term" value="P:translation"/>
    <property type="evidence" value="ECO:0007669"/>
    <property type="project" value="UniProtKB-UniRule"/>
</dbReference>
<dbReference type="Gene3D" id="4.10.830.30">
    <property type="entry name" value="Ribosomal protein L31"/>
    <property type="match status" value="1"/>
</dbReference>
<dbReference type="HAMAP" id="MF_00501">
    <property type="entry name" value="Ribosomal_bL31_1"/>
    <property type="match status" value="1"/>
</dbReference>
<dbReference type="InterPro" id="IPR034704">
    <property type="entry name" value="Ribosomal_bL28/bL31-like_sf"/>
</dbReference>
<dbReference type="InterPro" id="IPR002150">
    <property type="entry name" value="Ribosomal_bL31"/>
</dbReference>
<dbReference type="InterPro" id="IPR027491">
    <property type="entry name" value="Ribosomal_bL31_A"/>
</dbReference>
<dbReference type="InterPro" id="IPR042105">
    <property type="entry name" value="Ribosomal_bL31_sf"/>
</dbReference>
<dbReference type="NCBIfam" id="TIGR00105">
    <property type="entry name" value="L31"/>
    <property type="match status" value="1"/>
</dbReference>
<dbReference type="NCBIfam" id="NF000612">
    <property type="entry name" value="PRK00019.1"/>
    <property type="match status" value="1"/>
</dbReference>
<dbReference type="NCBIfam" id="NF001809">
    <property type="entry name" value="PRK00528.1"/>
    <property type="match status" value="1"/>
</dbReference>
<dbReference type="PANTHER" id="PTHR33280">
    <property type="entry name" value="50S RIBOSOMAL PROTEIN L31, CHLOROPLASTIC"/>
    <property type="match status" value="1"/>
</dbReference>
<dbReference type="PANTHER" id="PTHR33280:SF6">
    <property type="entry name" value="LARGE RIBOSOMAL SUBUNIT PROTEIN BL31A"/>
    <property type="match status" value="1"/>
</dbReference>
<dbReference type="Pfam" id="PF01197">
    <property type="entry name" value="Ribosomal_L31"/>
    <property type="match status" value="1"/>
</dbReference>
<dbReference type="PRINTS" id="PR01249">
    <property type="entry name" value="RIBOSOMALL31"/>
</dbReference>
<dbReference type="SUPFAM" id="SSF143800">
    <property type="entry name" value="L28p-like"/>
    <property type="match status" value="1"/>
</dbReference>
<dbReference type="PROSITE" id="PS01143">
    <property type="entry name" value="RIBOSOMAL_L31"/>
    <property type="match status" value="1"/>
</dbReference>
<sequence>MRQEIHPKYTEVTVTCSCGNTFVTRSTAGKKEMNIDICSECHPFYTGKQRIVDTAGRVDKFKKRFGGMKKI</sequence>
<accession>Q14J81</accession>
<name>RL31_FRAT1</name>